<keyword id="KW-0059">Arsenical resistance</keyword>
<keyword id="KW-0963">Cytoplasm</keyword>
<keyword id="KW-1015">Disulfide bond</keyword>
<keyword id="KW-0560">Oxidoreductase</keyword>
<keyword id="KW-0676">Redox-active center</keyword>
<reference key="1">
    <citation type="submission" date="2009-02" db="EMBL/GenBank/DDBJ databases">
        <title>Genome sequence of Bacillus cereus 03BB102.</title>
        <authorList>
            <person name="Dodson R.J."/>
            <person name="Jackson P."/>
            <person name="Munk A.C."/>
            <person name="Brettin T."/>
            <person name="Bruce D."/>
            <person name="Detter C."/>
            <person name="Tapia R."/>
            <person name="Han C."/>
            <person name="Sutton G."/>
            <person name="Sims D."/>
        </authorList>
    </citation>
    <scope>NUCLEOTIDE SEQUENCE [LARGE SCALE GENOMIC DNA]</scope>
    <source>
        <strain>03BB102</strain>
    </source>
</reference>
<proteinExistence type="inferred from homology"/>
<protein>
    <recommendedName>
        <fullName evidence="1">Arsenate reductase</fullName>
        <ecNumber evidence="1">1.20.4.4</ecNumber>
    </recommendedName>
</protein>
<evidence type="ECO:0000255" key="1">
    <source>
        <dbReference type="HAMAP-Rule" id="MF_01624"/>
    </source>
</evidence>
<gene>
    <name evidence="1" type="primary">arsC</name>
    <name type="ordered locus">BCA_3233</name>
</gene>
<feature type="chain" id="PRO_1000186116" description="Arsenate reductase">
    <location>
        <begin position="1"/>
        <end position="134"/>
    </location>
</feature>
<feature type="active site" description="Nucleophile" evidence="1">
    <location>
        <position position="11"/>
    </location>
</feature>
<feature type="active site" description="Nucleophile" evidence="1">
    <location>
        <position position="83"/>
    </location>
</feature>
<feature type="active site" description="Nucleophile" evidence="1">
    <location>
        <position position="90"/>
    </location>
</feature>
<feature type="disulfide bond" description="Redox-active; alternate" evidence="1">
    <location>
        <begin position="11"/>
        <end position="83"/>
    </location>
</feature>
<feature type="disulfide bond" description="Redox-active; alternate" evidence="1">
    <location>
        <begin position="83"/>
        <end position="90"/>
    </location>
</feature>
<dbReference type="EC" id="1.20.4.4" evidence="1"/>
<dbReference type="EMBL" id="CP001407">
    <property type="protein sequence ID" value="ACO26392.1"/>
    <property type="molecule type" value="Genomic_DNA"/>
</dbReference>
<dbReference type="RefSeq" id="WP_000428360.1">
    <property type="nucleotide sequence ID" value="NZ_CP009318.1"/>
</dbReference>
<dbReference type="SMR" id="C1F0A7"/>
<dbReference type="KEGG" id="bcx:BCA_3233"/>
<dbReference type="PATRIC" id="fig|572264.18.peg.3192"/>
<dbReference type="Proteomes" id="UP000002210">
    <property type="component" value="Chromosome"/>
</dbReference>
<dbReference type="GO" id="GO:0005737">
    <property type="term" value="C:cytoplasm"/>
    <property type="evidence" value="ECO:0007669"/>
    <property type="project" value="UniProtKB-SubCell"/>
</dbReference>
<dbReference type="GO" id="GO:0030612">
    <property type="term" value="F:arsenate reductase (thioredoxin) activity"/>
    <property type="evidence" value="ECO:0007669"/>
    <property type="project" value="UniProtKB-UniRule"/>
</dbReference>
<dbReference type="GO" id="GO:0004725">
    <property type="term" value="F:protein tyrosine phosphatase activity"/>
    <property type="evidence" value="ECO:0007669"/>
    <property type="project" value="InterPro"/>
</dbReference>
<dbReference type="GO" id="GO:0046685">
    <property type="term" value="P:response to arsenic-containing substance"/>
    <property type="evidence" value="ECO:0007669"/>
    <property type="project" value="UniProtKB-KW"/>
</dbReference>
<dbReference type="CDD" id="cd16345">
    <property type="entry name" value="LMWP_ArsC"/>
    <property type="match status" value="1"/>
</dbReference>
<dbReference type="FunFam" id="3.40.50.2300:FF:000237">
    <property type="entry name" value="Arsenate reductase"/>
    <property type="match status" value="1"/>
</dbReference>
<dbReference type="Gene3D" id="3.40.50.2300">
    <property type="match status" value="1"/>
</dbReference>
<dbReference type="HAMAP" id="MF_01624">
    <property type="entry name" value="Arsenate_reduct"/>
    <property type="match status" value="1"/>
</dbReference>
<dbReference type="InterPro" id="IPR014064">
    <property type="entry name" value="Arsenate_reductase_ArsC"/>
</dbReference>
<dbReference type="InterPro" id="IPR023485">
    <property type="entry name" value="Ptyr_pPase"/>
</dbReference>
<dbReference type="InterPro" id="IPR036196">
    <property type="entry name" value="Ptyr_pPase_sf"/>
</dbReference>
<dbReference type="NCBIfam" id="TIGR02691">
    <property type="entry name" value="arsC_pI258_fam"/>
    <property type="match status" value="1"/>
</dbReference>
<dbReference type="NCBIfam" id="NF010053">
    <property type="entry name" value="PRK13530.1"/>
    <property type="match status" value="1"/>
</dbReference>
<dbReference type="PANTHER" id="PTHR43428">
    <property type="entry name" value="ARSENATE REDUCTASE"/>
    <property type="match status" value="1"/>
</dbReference>
<dbReference type="PANTHER" id="PTHR43428:SF1">
    <property type="entry name" value="ARSENATE REDUCTASE"/>
    <property type="match status" value="1"/>
</dbReference>
<dbReference type="Pfam" id="PF01451">
    <property type="entry name" value="LMWPc"/>
    <property type="match status" value="1"/>
</dbReference>
<dbReference type="SMART" id="SM00226">
    <property type="entry name" value="LMWPc"/>
    <property type="match status" value="1"/>
</dbReference>
<dbReference type="SUPFAM" id="SSF52788">
    <property type="entry name" value="Phosphotyrosine protein phosphatases I"/>
    <property type="match status" value="1"/>
</dbReference>
<name>ARSC_BACC3</name>
<accession>C1F0A7</accession>
<sequence length="134" mass="15201">MENKKTIYFLCTGNSCRSQMAEAWGKQYLGDKWNVYSAGIEAHGVNPNAIKAMNEVNIDITNQTSDMIDINILNNADLVVTLCSHADSVCPSTPPHVNRVHWGFDDPAGKEWSEFQRVRDEIRERIKRFSEIGE</sequence>
<comment type="function">
    <text evidence="1">Catalyzes the reduction of arsenate [As(V)] to arsenite [As(III)].</text>
</comment>
<comment type="catalytic activity">
    <reaction evidence="1">
        <text>arsenate + [thioredoxin]-dithiol + H(+) = arsenite + [thioredoxin]-disulfide + H2O</text>
        <dbReference type="Rhea" id="RHEA:43848"/>
        <dbReference type="Rhea" id="RHEA-COMP:10698"/>
        <dbReference type="Rhea" id="RHEA-COMP:10700"/>
        <dbReference type="ChEBI" id="CHEBI:15377"/>
        <dbReference type="ChEBI" id="CHEBI:15378"/>
        <dbReference type="ChEBI" id="CHEBI:29242"/>
        <dbReference type="ChEBI" id="CHEBI:29950"/>
        <dbReference type="ChEBI" id="CHEBI:48597"/>
        <dbReference type="ChEBI" id="CHEBI:50058"/>
        <dbReference type="EC" id="1.20.4.4"/>
    </reaction>
</comment>
<comment type="subcellular location">
    <subcellularLocation>
        <location evidence="1">Cytoplasm</location>
    </subcellularLocation>
</comment>
<comment type="similarity">
    <text evidence="1">Belongs to the low molecular weight phosphotyrosine protein phosphatase family. Thioredoxin-coupled ArsC subfamily.</text>
</comment>
<organism>
    <name type="scientific">Bacillus cereus (strain 03BB102)</name>
    <dbReference type="NCBI Taxonomy" id="572264"/>
    <lineage>
        <taxon>Bacteria</taxon>
        <taxon>Bacillati</taxon>
        <taxon>Bacillota</taxon>
        <taxon>Bacilli</taxon>
        <taxon>Bacillales</taxon>
        <taxon>Bacillaceae</taxon>
        <taxon>Bacillus</taxon>
        <taxon>Bacillus cereus group</taxon>
    </lineage>
</organism>